<accession>P16843</accession>
<accession>Q7M6T8</accession>
<feature type="chain" id="PRO_0000115306" description="Uncharacterized protein UL10">
    <location>
        <begin position="1"/>
        <end position="258"/>
    </location>
</feature>
<feature type="transmembrane region" description="Helical" evidence="1">
    <location>
        <begin position="208"/>
        <end position="228"/>
    </location>
</feature>
<feature type="region of interest" description="Disordered" evidence="2">
    <location>
        <begin position="147"/>
        <end position="183"/>
    </location>
</feature>
<feature type="compositionally biased region" description="Low complexity" evidence="2">
    <location>
        <begin position="147"/>
        <end position="156"/>
    </location>
</feature>
<feature type="compositionally biased region" description="Polar residues" evidence="2">
    <location>
        <begin position="157"/>
        <end position="166"/>
    </location>
</feature>
<feature type="compositionally biased region" description="Basic residues" evidence="2">
    <location>
        <begin position="167"/>
        <end position="177"/>
    </location>
</feature>
<feature type="glycosylation site" description="N-linked (GlcNAc...) asparagine; by host" evidence="1">
    <location>
        <position position="60"/>
    </location>
</feature>
<feature type="glycosylation site" description="N-linked (GlcNAc...) asparagine; by host" evidence="1">
    <location>
        <position position="104"/>
    </location>
</feature>
<feature type="glycosylation site" description="N-linked (GlcNAc...) asparagine; by host" evidence="1">
    <location>
        <position position="113"/>
    </location>
</feature>
<feature type="glycosylation site" description="N-linked (GlcNAc...) asparagine; by host" evidence="1">
    <location>
        <position position="183"/>
    </location>
</feature>
<organism>
    <name type="scientific">Human cytomegalovirus (strain AD169)</name>
    <name type="common">HHV-5</name>
    <name type="synonym">Human herpesvirus 5</name>
    <dbReference type="NCBI Taxonomy" id="10360"/>
    <lineage>
        <taxon>Viruses</taxon>
        <taxon>Duplodnaviria</taxon>
        <taxon>Heunggongvirae</taxon>
        <taxon>Peploviricota</taxon>
        <taxon>Herviviricetes</taxon>
        <taxon>Herpesvirales</taxon>
        <taxon>Orthoherpesviridae</taxon>
        <taxon>Betaherpesvirinae</taxon>
        <taxon>Cytomegalovirus</taxon>
        <taxon>Cytomegalovirus humanbeta5</taxon>
        <taxon>Human cytomegalovirus</taxon>
    </lineage>
</organism>
<sequence>MRRLINHIVNHDLFRWSVMTAMIFYRYSETCMEVTVRVGDPVTLGSGHGYHPGQKVHWYNQSCVGISNGENTHPICTYDPPKPGRRKTMKTTPLPSPLLYECHNSTLSILHVNVSDPKNYCRRKCPPNGNCEFPTCFTLSLISRTTTTRKPGQKTTLSRLKTTPNKHTQHKRSTRRTSPRDYNVTGLPKGFADSFTGNVEAHRAKDAAHSAWILIVIIIIIVVILFFFKIPQRLREKWDTRGYLYKGTDGLPTTDYLS</sequence>
<gene>
    <name type="primary">UL10</name>
</gene>
<name>UL10_HCMVA</name>
<dbReference type="EMBL" id="X17403">
    <property type="protein sequence ID" value="CAA35443.1"/>
    <property type="status" value="ALT_INIT"/>
    <property type="molecule type" value="Genomic_DNA"/>
</dbReference>
<dbReference type="EMBL" id="BK000394">
    <property type="protein sequence ID" value="DAA00096.1"/>
    <property type="molecule type" value="Genomic_DNA"/>
</dbReference>
<dbReference type="PIR" id="S09773">
    <property type="entry name" value="S09773"/>
</dbReference>
<dbReference type="GlyCosmos" id="P16843">
    <property type="glycosylation" value="4 sites, No reported glycans"/>
</dbReference>
<dbReference type="Proteomes" id="UP000008991">
    <property type="component" value="Segment"/>
</dbReference>
<dbReference type="Proteomes" id="UP000008992">
    <property type="component" value="Segment"/>
</dbReference>
<dbReference type="GO" id="GO:0016020">
    <property type="term" value="C:membrane"/>
    <property type="evidence" value="ECO:0007669"/>
    <property type="project" value="UniProtKB-SubCell"/>
</dbReference>
<proteinExistence type="inferred from homology"/>
<protein>
    <recommendedName>
        <fullName>Uncharacterized protein UL10</fullName>
    </recommendedName>
</protein>
<reference key="1">
    <citation type="journal article" date="1990" name="Curr. Top. Microbiol. Immunol.">
        <title>Analysis of the protein-coding content of the sequence of human cytomegalovirus strain AD169.</title>
        <authorList>
            <person name="Chee M.S."/>
            <person name="Bankier A.T."/>
            <person name="Beck S."/>
            <person name="Bohni R."/>
            <person name="Brown C.M."/>
            <person name="Cerny R."/>
            <person name="Horsnell T."/>
            <person name="Hutchison C.A. III"/>
            <person name="Kouzarides T."/>
            <person name="Martignetti J.A."/>
            <person name="Preddie E."/>
            <person name="Satchwell S.C."/>
            <person name="Tomlinson P."/>
            <person name="Weston K.M."/>
            <person name="Barrell B.G."/>
        </authorList>
    </citation>
    <scope>NUCLEOTIDE SEQUENCE [LARGE SCALE GENOMIC DNA]</scope>
</reference>
<reference key="2">
    <citation type="journal article" date="2003" name="J. Gen. Virol.">
        <title>The human cytomegalovirus genome revisited: comparison with the chimpanzee cytomegalovirus genome.</title>
        <authorList>
            <person name="Davison A.J."/>
            <person name="Dolan A."/>
            <person name="Akter P."/>
            <person name="Addison C."/>
            <person name="Dargan D.J."/>
            <person name="Alcendor D.J."/>
            <person name="McGeoch D.J."/>
            <person name="Hayward G.S."/>
        </authorList>
    </citation>
    <scope>GENOME REANNOTATION</scope>
</reference>
<reference key="3">
    <citation type="journal article" date="2003" name="J. Gen. Virol.">
        <authorList>
            <person name="Davison A.J."/>
            <person name="Dolan A."/>
            <person name="Akter P."/>
            <person name="Addison C."/>
            <person name="Dargan D.J."/>
            <person name="Alcendor D.J."/>
            <person name="McGeoch D.J."/>
            <person name="Hayward G.S."/>
        </authorList>
    </citation>
    <scope>ERRATUM OF PUBMED:12533697</scope>
</reference>
<organismHost>
    <name type="scientific">Homo sapiens</name>
    <name type="common">Human</name>
    <dbReference type="NCBI Taxonomy" id="9606"/>
</organismHost>
<keyword id="KW-0325">Glycoprotein</keyword>
<keyword id="KW-0472">Membrane</keyword>
<keyword id="KW-1185">Reference proteome</keyword>
<keyword id="KW-0812">Transmembrane</keyword>
<keyword id="KW-1133">Transmembrane helix</keyword>
<comment type="subcellular location">
    <subcellularLocation>
        <location evidence="3">Membrane</location>
        <topology evidence="3">Single-pass membrane protein</topology>
    </subcellularLocation>
</comment>
<comment type="similarity">
    <text evidence="3">Belongs to the RL11 family.</text>
</comment>
<comment type="sequence caution" evidence="3">
    <conflict type="erroneous initiation">
        <sequence resource="EMBL-CDS" id="CAA35443"/>
    </conflict>
</comment>
<evidence type="ECO:0000255" key="1"/>
<evidence type="ECO:0000256" key="2">
    <source>
        <dbReference type="SAM" id="MobiDB-lite"/>
    </source>
</evidence>
<evidence type="ECO:0000305" key="3"/>